<comment type="function">
    <text evidence="1">Catalyzes the dephosphorylation of undecaprenyl diphosphate (UPP). Confers resistance to bacitracin.</text>
</comment>
<comment type="catalytic activity">
    <reaction evidence="1">
        <text>di-trans,octa-cis-undecaprenyl diphosphate + H2O = di-trans,octa-cis-undecaprenyl phosphate + phosphate + H(+)</text>
        <dbReference type="Rhea" id="RHEA:28094"/>
        <dbReference type="ChEBI" id="CHEBI:15377"/>
        <dbReference type="ChEBI" id="CHEBI:15378"/>
        <dbReference type="ChEBI" id="CHEBI:43474"/>
        <dbReference type="ChEBI" id="CHEBI:58405"/>
        <dbReference type="ChEBI" id="CHEBI:60392"/>
        <dbReference type="EC" id="3.6.1.27"/>
    </reaction>
</comment>
<comment type="subcellular location">
    <subcellularLocation>
        <location evidence="1">Cell inner membrane</location>
        <topology evidence="1">Multi-pass membrane protein</topology>
    </subcellularLocation>
</comment>
<comment type="miscellaneous">
    <text>Bacitracin is thought to be involved in the inhibition of peptidoglycan synthesis by sequestering undecaprenyl diphosphate, thereby reducing the pool of lipid carrier available.</text>
</comment>
<comment type="similarity">
    <text evidence="1">Belongs to the UppP family.</text>
</comment>
<feature type="chain" id="PRO_0000318867" description="Undecaprenyl-diphosphatase">
    <location>
        <begin position="1"/>
        <end position="250"/>
    </location>
</feature>
<feature type="transmembrane region" description="Helical" evidence="1">
    <location>
        <begin position="35"/>
        <end position="55"/>
    </location>
</feature>
<feature type="transmembrane region" description="Helical" evidence="1">
    <location>
        <begin position="73"/>
        <end position="93"/>
    </location>
</feature>
<feature type="transmembrane region" description="Helical" evidence="1">
    <location>
        <begin position="100"/>
        <end position="120"/>
    </location>
</feature>
<feature type="transmembrane region" description="Helical" evidence="1">
    <location>
        <begin position="146"/>
        <end position="166"/>
    </location>
</feature>
<feature type="transmembrane region" description="Helical" evidence="1">
    <location>
        <begin position="171"/>
        <end position="191"/>
    </location>
</feature>
<feature type="transmembrane region" description="Helical" evidence="1">
    <location>
        <begin position="200"/>
        <end position="220"/>
    </location>
</feature>
<feature type="transmembrane region" description="Helical" evidence="1">
    <location>
        <begin position="229"/>
        <end position="249"/>
    </location>
</feature>
<reference key="1">
    <citation type="submission" date="2007-05" db="EMBL/GenBank/DDBJ databases">
        <title>Complete sequence of Thermosipho melanesiensis BI429.</title>
        <authorList>
            <consortium name="US DOE Joint Genome Institute"/>
            <person name="Copeland A."/>
            <person name="Lucas S."/>
            <person name="Lapidus A."/>
            <person name="Barry K."/>
            <person name="Glavina del Rio T."/>
            <person name="Dalin E."/>
            <person name="Tice H."/>
            <person name="Pitluck S."/>
            <person name="Chertkov O."/>
            <person name="Brettin T."/>
            <person name="Bruce D."/>
            <person name="Detter J.C."/>
            <person name="Han C."/>
            <person name="Schmutz J."/>
            <person name="Larimer F."/>
            <person name="Land M."/>
            <person name="Hauser L."/>
            <person name="Kyrpides N."/>
            <person name="Mikhailova N."/>
            <person name="Nelson K."/>
            <person name="Gogarten J.P."/>
            <person name="Noll K."/>
            <person name="Richardson P."/>
        </authorList>
    </citation>
    <scope>NUCLEOTIDE SEQUENCE [LARGE SCALE GENOMIC DNA]</scope>
    <source>
        <strain>DSM 12029 / CIP 104789 / BI429</strain>
    </source>
</reference>
<organism>
    <name type="scientific">Thermosipho melanesiensis (strain DSM 12029 / CIP 104789 / BI429)</name>
    <dbReference type="NCBI Taxonomy" id="391009"/>
    <lineage>
        <taxon>Bacteria</taxon>
        <taxon>Thermotogati</taxon>
        <taxon>Thermotogota</taxon>
        <taxon>Thermotogae</taxon>
        <taxon>Thermotogales</taxon>
        <taxon>Fervidobacteriaceae</taxon>
        <taxon>Thermosipho</taxon>
    </lineage>
</organism>
<sequence length="250" mass="27087">MEIILGIVQGLTEFLPISSSGHLSVFSKLFNLKPDLSVFALLHLATLAAIVIFVGKELTEIIKGLIKLEKNYINLTLKIIVSTIPAAIFGVLLESKIEASLSNLKIISFFFLVTSAALLISDKIKGNKDLSTLTYKDALVIGIMQALAIFPGISRSGFTLFGSLLIGLEREIALKYSFLVSIPVILGAGLLEIKNISLNSYSISSAIVAFFFGLLSLFILKKATISKNLKIFSAYCIFISIFSFVLGGIK</sequence>
<dbReference type="EC" id="3.6.1.27" evidence="1"/>
<dbReference type="EMBL" id="CP000716">
    <property type="protein sequence ID" value="ABR30084.1"/>
    <property type="molecule type" value="Genomic_DNA"/>
</dbReference>
<dbReference type="RefSeq" id="WP_012056445.1">
    <property type="nucleotide sequence ID" value="NC_009616.1"/>
</dbReference>
<dbReference type="SMR" id="A6LJI3"/>
<dbReference type="STRING" id="391009.Tmel_0210"/>
<dbReference type="KEGG" id="tme:Tmel_0210"/>
<dbReference type="eggNOG" id="COG1968">
    <property type="taxonomic scope" value="Bacteria"/>
</dbReference>
<dbReference type="HOGENOM" id="CLU_060296_1_2_0"/>
<dbReference type="OrthoDB" id="9808289at2"/>
<dbReference type="Proteomes" id="UP000001110">
    <property type="component" value="Chromosome"/>
</dbReference>
<dbReference type="GO" id="GO:0005886">
    <property type="term" value="C:plasma membrane"/>
    <property type="evidence" value="ECO:0007669"/>
    <property type="project" value="UniProtKB-SubCell"/>
</dbReference>
<dbReference type="GO" id="GO:0050380">
    <property type="term" value="F:undecaprenyl-diphosphatase activity"/>
    <property type="evidence" value="ECO:0007669"/>
    <property type="project" value="UniProtKB-UniRule"/>
</dbReference>
<dbReference type="GO" id="GO:0071555">
    <property type="term" value="P:cell wall organization"/>
    <property type="evidence" value="ECO:0007669"/>
    <property type="project" value="UniProtKB-KW"/>
</dbReference>
<dbReference type="GO" id="GO:0009252">
    <property type="term" value="P:peptidoglycan biosynthetic process"/>
    <property type="evidence" value="ECO:0007669"/>
    <property type="project" value="UniProtKB-KW"/>
</dbReference>
<dbReference type="GO" id="GO:0008360">
    <property type="term" value="P:regulation of cell shape"/>
    <property type="evidence" value="ECO:0007669"/>
    <property type="project" value="UniProtKB-KW"/>
</dbReference>
<dbReference type="GO" id="GO:0046677">
    <property type="term" value="P:response to antibiotic"/>
    <property type="evidence" value="ECO:0007669"/>
    <property type="project" value="UniProtKB-UniRule"/>
</dbReference>
<dbReference type="HAMAP" id="MF_01006">
    <property type="entry name" value="Undec_diphosphatase"/>
    <property type="match status" value="1"/>
</dbReference>
<dbReference type="InterPro" id="IPR003824">
    <property type="entry name" value="UppP"/>
</dbReference>
<dbReference type="PANTHER" id="PTHR30622">
    <property type="entry name" value="UNDECAPRENYL-DIPHOSPHATASE"/>
    <property type="match status" value="1"/>
</dbReference>
<dbReference type="PANTHER" id="PTHR30622:SF4">
    <property type="entry name" value="UNDECAPRENYL-DIPHOSPHATASE"/>
    <property type="match status" value="1"/>
</dbReference>
<dbReference type="Pfam" id="PF02673">
    <property type="entry name" value="BacA"/>
    <property type="match status" value="1"/>
</dbReference>
<accession>A6LJI3</accession>
<gene>
    <name evidence="1" type="primary">uppP</name>
    <name type="ordered locus">Tmel_0210</name>
</gene>
<evidence type="ECO:0000255" key="1">
    <source>
        <dbReference type="HAMAP-Rule" id="MF_01006"/>
    </source>
</evidence>
<proteinExistence type="inferred from homology"/>
<protein>
    <recommendedName>
        <fullName evidence="1">Undecaprenyl-diphosphatase</fullName>
        <ecNumber evidence="1">3.6.1.27</ecNumber>
    </recommendedName>
    <alternativeName>
        <fullName evidence="1">Bacitracin resistance protein</fullName>
    </alternativeName>
    <alternativeName>
        <fullName evidence="1">Undecaprenyl pyrophosphate phosphatase</fullName>
    </alternativeName>
</protein>
<keyword id="KW-0046">Antibiotic resistance</keyword>
<keyword id="KW-0997">Cell inner membrane</keyword>
<keyword id="KW-1003">Cell membrane</keyword>
<keyword id="KW-0133">Cell shape</keyword>
<keyword id="KW-0961">Cell wall biogenesis/degradation</keyword>
<keyword id="KW-0378">Hydrolase</keyword>
<keyword id="KW-0472">Membrane</keyword>
<keyword id="KW-0573">Peptidoglycan synthesis</keyword>
<keyword id="KW-0812">Transmembrane</keyword>
<keyword id="KW-1133">Transmembrane helix</keyword>
<name>UPPP_THEM4</name>